<sequence length="113" mass="12629">MAKTSTSPVAPTRLWVKAAFTGFRRSKHTQNSNQALLKLQNVNTKEDVAFYQGKRVVYIYKGQKKNGSNYRTIWGRIGKAHGNNGVAVARFAHNLPPQAIGSVLRVMLYPNRA</sequence>
<protein>
    <recommendedName>
        <fullName evidence="1">Large ribosomal subunit protein eL33</fullName>
    </recommendedName>
    <alternativeName>
        <fullName>60S ribosomal protein L35a</fullName>
    </alternativeName>
</protein>
<organism>
    <name type="scientific">Tetrahymena thermophila (strain SB210)</name>
    <dbReference type="NCBI Taxonomy" id="312017"/>
    <lineage>
        <taxon>Eukaryota</taxon>
        <taxon>Sar</taxon>
        <taxon>Alveolata</taxon>
        <taxon>Ciliophora</taxon>
        <taxon>Intramacronucleata</taxon>
        <taxon>Oligohymenophorea</taxon>
        <taxon>Hymenostomatida</taxon>
        <taxon>Tetrahymenina</taxon>
        <taxon>Tetrahymenidae</taxon>
        <taxon>Tetrahymena</taxon>
    </lineage>
</organism>
<feature type="chain" id="PRO_0000413517" description="Large ribosomal subunit protein eL33">
    <location>
        <begin position="1"/>
        <end position="113"/>
    </location>
</feature>
<reference key="1">
    <citation type="journal article" date="2006" name="PLoS Biol.">
        <title>Macronuclear genome sequence of the ciliate Tetrahymena thermophila, a model eukaryote.</title>
        <authorList>
            <person name="Eisen J.A."/>
            <person name="Coyne R.S."/>
            <person name="Wu M."/>
            <person name="Wu D."/>
            <person name="Thiagarajan M."/>
            <person name="Wortman J.R."/>
            <person name="Badger J.H."/>
            <person name="Ren Q."/>
            <person name="Amedeo P."/>
            <person name="Jones K.M."/>
            <person name="Tallon L.J."/>
            <person name="Delcher A.L."/>
            <person name="Salzberg S.L."/>
            <person name="Silva J.C."/>
            <person name="Haas B.J."/>
            <person name="Majoros W.H."/>
            <person name="Farzad M."/>
            <person name="Carlton J.M."/>
            <person name="Smith R.K. Jr."/>
            <person name="Garg J."/>
            <person name="Pearlman R.E."/>
            <person name="Karrer K.M."/>
            <person name="Sun L."/>
            <person name="Manning G."/>
            <person name="Elde N.C."/>
            <person name="Turkewitz A.P."/>
            <person name="Asai D.J."/>
            <person name="Wilkes D.E."/>
            <person name="Wang Y."/>
            <person name="Cai H."/>
            <person name="Collins K."/>
            <person name="Stewart B.A."/>
            <person name="Lee S.R."/>
            <person name="Wilamowska K."/>
            <person name="Weinberg Z."/>
            <person name="Ruzzo W.L."/>
            <person name="Wloga D."/>
            <person name="Gaertig J."/>
            <person name="Frankel J."/>
            <person name="Tsao C.-C."/>
            <person name="Gorovsky M.A."/>
            <person name="Keeling P.J."/>
            <person name="Waller R.F."/>
            <person name="Patron N.J."/>
            <person name="Cherry J.M."/>
            <person name="Stover N.A."/>
            <person name="Krieger C.J."/>
            <person name="del Toro C."/>
            <person name="Ryder H.F."/>
            <person name="Williamson S.C."/>
            <person name="Barbeau R.A."/>
            <person name="Hamilton E.P."/>
            <person name="Orias E."/>
        </authorList>
    </citation>
    <scope>NUCLEOTIDE SEQUENCE [LARGE SCALE GENOMIC DNA]</scope>
    <source>
        <strain>SB210</strain>
    </source>
</reference>
<reference key="2">
    <citation type="submission" date="2007-08" db="EMBL/GenBank/DDBJ databases">
        <title>cDNA library made from Tetrahymena thermophila cells.</title>
        <authorList>
            <person name="Coyne R.S."/>
            <person name="Thiagarajan M."/>
            <person name="Eisen J.A."/>
            <person name="Methe B."/>
        </authorList>
    </citation>
    <scope>NUCLEOTIDE SEQUENCE [LARGE SCALE MRNA]</scope>
    <source>
        <strain>SB210</strain>
    </source>
</reference>
<name>RL35A_TETTS</name>
<comment type="similarity">
    <text evidence="1">Belongs to the eukaryotic ribosomal protein eL33 family.</text>
</comment>
<comment type="sequence caution" evidence="1">
    <conflict type="erroneous gene model prediction">
        <sequence resource="EMBL-CDS" id="EAR83273"/>
    </conflict>
</comment>
<proteinExistence type="evidence at protein level"/>
<evidence type="ECO:0000305" key="1"/>
<accession>P0DJ22</accession>
<accession>Q22DC9</accession>
<dbReference type="EMBL" id="GG662439">
    <property type="protein sequence ID" value="EAR83273.3"/>
    <property type="status" value="ALT_SEQ"/>
    <property type="molecule type" value="Genomic_DNA"/>
</dbReference>
<dbReference type="EMBL" id="EV839535">
    <property type="status" value="NOT_ANNOTATED_CDS"/>
    <property type="molecule type" value="mRNA"/>
</dbReference>
<dbReference type="RefSeq" id="XP_001030936.3">
    <property type="nucleotide sequence ID" value="XM_001030936.3"/>
</dbReference>
<dbReference type="PDB" id="4V8P">
    <property type="method" value="X-ray"/>
    <property type="resolution" value="3.52 A"/>
    <property type="chains" value="AH/DH/FH/HH=1-113"/>
</dbReference>
<dbReference type="PDBsum" id="4V8P"/>
<dbReference type="SMR" id="P0DJ22"/>
<dbReference type="FunCoup" id="P0DJ22">
    <property type="interactions" value="351"/>
</dbReference>
<dbReference type="IntAct" id="P0DJ22">
    <property type="interactions" value="1"/>
</dbReference>
<dbReference type="STRING" id="312017.P0DJ22"/>
<dbReference type="EnsemblProtists" id="EAR83273">
    <property type="protein sequence ID" value="EAR83273"/>
    <property type="gene ID" value="TTHERM_00992730"/>
</dbReference>
<dbReference type="GeneID" id="7833093"/>
<dbReference type="KEGG" id="tet:TTHERM_00992730"/>
<dbReference type="eggNOG" id="KOG0887">
    <property type="taxonomic scope" value="Eukaryota"/>
</dbReference>
<dbReference type="InParanoid" id="P0DJ22"/>
<dbReference type="Proteomes" id="UP000009168">
    <property type="component" value="Unassembled WGS sequence"/>
</dbReference>
<dbReference type="GO" id="GO:1990904">
    <property type="term" value="C:ribonucleoprotein complex"/>
    <property type="evidence" value="ECO:0007669"/>
    <property type="project" value="UniProtKB-KW"/>
</dbReference>
<dbReference type="GO" id="GO:0005840">
    <property type="term" value="C:ribosome"/>
    <property type="evidence" value="ECO:0007669"/>
    <property type="project" value="UniProtKB-KW"/>
</dbReference>
<dbReference type="GO" id="GO:0003735">
    <property type="term" value="F:structural constituent of ribosome"/>
    <property type="evidence" value="ECO:0007669"/>
    <property type="project" value="InterPro"/>
</dbReference>
<dbReference type="GO" id="GO:0000049">
    <property type="term" value="F:tRNA binding"/>
    <property type="evidence" value="ECO:0007669"/>
    <property type="project" value="UniProtKB-KW"/>
</dbReference>
<dbReference type="GO" id="GO:0006412">
    <property type="term" value="P:translation"/>
    <property type="evidence" value="ECO:0007669"/>
    <property type="project" value="InterPro"/>
</dbReference>
<dbReference type="FunFam" id="2.40.10.190:FF:000001">
    <property type="entry name" value="60S ribosomal protein L35a"/>
    <property type="match status" value="1"/>
</dbReference>
<dbReference type="Gene3D" id="2.40.10.190">
    <property type="entry name" value="translation elongation factor selb, chain A, domain 4"/>
    <property type="match status" value="1"/>
</dbReference>
<dbReference type="HAMAP" id="MF_00573">
    <property type="entry name" value="Ribosomal_eL33"/>
    <property type="match status" value="1"/>
</dbReference>
<dbReference type="InterPro" id="IPR001780">
    <property type="entry name" value="Ribosomal_eL33"/>
</dbReference>
<dbReference type="InterPro" id="IPR038661">
    <property type="entry name" value="Ribosomal_eL33_sf"/>
</dbReference>
<dbReference type="InterPro" id="IPR009000">
    <property type="entry name" value="Transl_B-barrel_sf"/>
</dbReference>
<dbReference type="PANTHER" id="PTHR10902">
    <property type="entry name" value="60S RIBOSOMAL PROTEIN L35A"/>
    <property type="match status" value="1"/>
</dbReference>
<dbReference type="Pfam" id="PF01247">
    <property type="entry name" value="Ribosomal_L35Ae"/>
    <property type="match status" value="1"/>
</dbReference>
<dbReference type="SUPFAM" id="SSF50447">
    <property type="entry name" value="Translation proteins"/>
    <property type="match status" value="1"/>
</dbReference>
<keyword id="KW-0002">3D-structure</keyword>
<keyword id="KW-1185">Reference proteome</keyword>
<keyword id="KW-0687">Ribonucleoprotein</keyword>
<keyword id="KW-0689">Ribosomal protein</keyword>
<keyword id="KW-0694">RNA-binding</keyword>
<keyword id="KW-0820">tRNA-binding</keyword>
<gene>
    <name type="primary">RPL35A</name>
    <name type="synonym">RL33A</name>
    <name type="ORF">TTHERM_00992730</name>
</gene>